<comment type="function">
    <text evidence="1">Catalyzes the conversion of (8S)-3',8-cyclo-7,8-dihydroguanosine 5'-triphosphate to cyclic pyranopterin monophosphate (cPMP).</text>
</comment>
<comment type="catalytic activity">
    <reaction evidence="1">
        <text>(8S)-3',8-cyclo-7,8-dihydroguanosine 5'-triphosphate = cyclic pyranopterin phosphate + diphosphate</text>
        <dbReference type="Rhea" id="RHEA:49580"/>
        <dbReference type="ChEBI" id="CHEBI:33019"/>
        <dbReference type="ChEBI" id="CHEBI:59648"/>
        <dbReference type="ChEBI" id="CHEBI:131766"/>
        <dbReference type="EC" id="4.6.1.17"/>
    </reaction>
</comment>
<comment type="pathway">
    <text evidence="1">Cofactor biosynthesis; molybdopterin biosynthesis.</text>
</comment>
<comment type="subunit">
    <text evidence="1">Homohexamer; trimer of dimers.</text>
</comment>
<comment type="similarity">
    <text evidence="1">Belongs to the MoaC family.</text>
</comment>
<proteinExistence type="inferred from homology"/>
<accession>P65394</accession>
<accession>Q99RZ8</accession>
<evidence type="ECO:0000255" key="1">
    <source>
        <dbReference type="HAMAP-Rule" id="MF_01224"/>
    </source>
</evidence>
<sequence>MTEFTHINQQGHAKMVDVSDKQITKRTAVAHSSITVNETIFKQISNNTNTKGNVLNTAQIAGIMAAKNTSTIIPMCHPLPLTGIDVHFSWDETNAPLYTLNIQTTVSTTGKTGVEMEALTAASATALTIYDMTKAVDKGMIIGETYLESKSGGKSGDFQRQSGQ</sequence>
<organism>
    <name type="scientific">Staphylococcus aureus (strain Mu50 / ATCC 700699)</name>
    <dbReference type="NCBI Taxonomy" id="158878"/>
    <lineage>
        <taxon>Bacteria</taxon>
        <taxon>Bacillati</taxon>
        <taxon>Bacillota</taxon>
        <taxon>Bacilli</taxon>
        <taxon>Bacillales</taxon>
        <taxon>Staphylococcaceae</taxon>
        <taxon>Staphylococcus</taxon>
    </lineage>
</organism>
<keyword id="KW-0456">Lyase</keyword>
<keyword id="KW-0501">Molybdenum cofactor biosynthesis</keyword>
<reference key="1">
    <citation type="journal article" date="2001" name="Lancet">
        <title>Whole genome sequencing of meticillin-resistant Staphylococcus aureus.</title>
        <authorList>
            <person name="Kuroda M."/>
            <person name="Ohta T."/>
            <person name="Uchiyama I."/>
            <person name="Baba T."/>
            <person name="Yuzawa H."/>
            <person name="Kobayashi I."/>
            <person name="Cui L."/>
            <person name="Oguchi A."/>
            <person name="Aoki K."/>
            <person name="Nagai Y."/>
            <person name="Lian J.-Q."/>
            <person name="Ito T."/>
            <person name="Kanamori M."/>
            <person name="Matsumaru H."/>
            <person name="Maruyama A."/>
            <person name="Murakami H."/>
            <person name="Hosoyama A."/>
            <person name="Mizutani-Ui Y."/>
            <person name="Takahashi N.K."/>
            <person name="Sawano T."/>
            <person name="Inoue R."/>
            <person name="Kaito C."/>
            <person name="Sekimizu K."/>
            <person name="Hirakawa H."/>
            <person name="Kuhara S."/>
            <person name="Goto S."/>
            <person name="Yabuzaki J."/>
            <person name="Kanehisa M."/>
            <person name="Yamashita A."/>
            <person name="Oshima K."/>
            <person name="Furuya K."/>
            <person name="Yoshino C."/>
            <person name="Shiba T."/>
            <person name="Hattori M."/>
            <person name="Ogasawara N."/>
            <person name="Hayashi H."/>
            <person name="Hiramatsu K."/>
        </authorList>
    </citation>
    <scope>NUCLEOTIDE SEQUENCE [LARGE SCALE GENOMIC DNA]</scope>
    <source>
        <strain>Mu50 / ATCC 700699</strain>
    </source>
</reference>
<protein>
    <recommendedName>
        <fullName evidence="1">Cyclic pyranopterin monophosphate synthase</fullName>
        <ecNumber evidence="1">4.6.1.17</ecNumber>
    </recommendedName>
    <alternativeName>
        <fullName evidence="1">Molybdenum cofactor biosynthesis protein C</fullName>
    </alternativeName>
</protein>
<feature type="chain" id="PRO_0000097830" description="Cyclic pyranopterin monophosphate synthase">
    <location>
        <begin position="1"/>
        <end position="164"/>
    </location>
</feature>
<feature type="active site" evidence="1">
    <location>
        <position position="131"/>
    </location>
</feature>
<feature type="binding site" evidence="1">
    <location>
        <begin position="75"/>
        <end position="77"/>
    </location>
    <ligand>
        <name>substrate</name>
    </ligand>
</feature>
<feature type="binding site" evidence="1">
    <location>
        <begin position="116"/>
        <end position="117"/>
    </location>
    <ligand>
        <name>substrate</name>
    </ligand>
</feature>
<dbReference type="EC" id="4.6.1.17" evidence="1"/>
<dbReference type="EMBL" id="BA000017">
    <property type="protein sequence ID" value="BAB58436.1"/>
    <property type="molecule type" value="Genomic_DNA"/>
</dbReference>
<dbReference type="RefSeq" id="WP_000134526.1">
    <property type="nucleotide sequence ID" value="NC_002758.2"/>
</dbReference>
<dbReference type="SMR" id="P65394"/>
<dbReference type="KEGG" id="sav:SAV2274"/>
<dbReference type="HOGENOM" id="CLU_074693_1_1_9"/>
<dbReference type="PhylomeDB" id="P65394"/>
<dbReference type="UniPathway" id="UPA00344"/>
<dbReference type="Proteomes" id="UP000002481">
    <property type="component" value="Chromosome"/>
</dbReference>
<dbReference type="GO" id="GO:0061799">
    <property type="term" value="F:cyclic pyranopterin monophosphate synthase activity"/>
    <property type="evidence" value="ECO:0007669"/>
    <property type="project" value="UniProtKB-UniRule"/>
</dbReference>
<dbReference type="GO" id="GO:0006777">
    <property type="term" value="P:Mo-molybdopterin cofactor biosynthetic process"/>
    <property type="evidence" value="ECO:0007669"/>
    <property type="project" value="UniProtKB-UniRule"/>
</dbReference>
<dbReference type="CDD" id="cd01420">
    <property type="entry name" value="MoaC_PE"/>
    <property type="match status" value="1"/>
</dbReference>
<dbReference type="Gene3D" id="3.30.70.640">
    <property type="entry name" value="Molybdopterin cofactor biosynthesis C (MoaC) domain"/>
    <property type="match status" value="1"/>
</dbReference>
<dbReference type="HAMAP" id="MF_01224_B">
    <property type="entry name" value="MoaC_B"/>
    <property type="match status" value="1"/>
</dbReference>
<dbReference type="InterPro" id="IPR023045">
    <property type="entry name" value="MoaC"/>
</dbReference>
<dbReference type="InterPro" id="IPR047594">
    <property type="entry name" value="MoaC_bact/euk"/>
</dbReference>
<dbReference type="InterPro" id="IPR036522">
    <property type="entry name" value="MoaC_sf"/>
</dbReference>
<dbReference type="InterPro" id="IPR050105">
    <property type="entry name" value="MoCo_biosynth_MoaA/MoaC"/>
</dbReference>
<dbReference type="InterPro" id="IPR002820">
    <property type="entry name" value="Mopterin_CF_biosynth-C_dom"/>
</dbReference>
<dbReference type="NCBIfam" id="TIGR00581">
    <property type="entry name" value="moaC"/>
    <property type="match status" value="1"/>
</dbReference>
<dbReference type="NCBIfam" id="NF006870">
    <property type="entry name" value="PRK09364.1"/>
    <property type="match status" value="1"/>
</dbReference>
<dbReference type="PANTHER" id="PTHR22960">
    <property type="entry name" value="MOLYBDOPTERIN COFACTOR SYNTHESIS PROTEIN A"/>
    <property type="match status" value="1"/>
</dbReference>
<dbReference type="Pfam" id="PF01967">
    <property type="entry name" value="MoaC"/>
    <property type="match status" value="1"/>
</dbReference>
<dbReference type="SUPFAM" id="SSF55040">
    <property type="entry name" value="Molybdenum cofactor biosynthesis protein C, MoaC"/>
    <property type="match status" value="1"/>
</dbReference>
<name>MOAC_STAAM</name>
<gene>
    <name evidence="1" type="primary">moaC</name>
    <name type="ordered locus">SAV2274</name>
</gene>